<dbReference type="EMBL" id="AJ532571">
    <property type="protein sequence ID" value="CAD58693.1"/>
    <property type="molecule type" value="mRNA"/>
</dbReference>
<dbReference type="EMBL" id="AL133452">
    <property type="protein sequence ID" value="CAB63013.1"/>
    <property type="molecule type" value="Genomic_DNA"/>
</dbReference>
<dbReference type="EMBL" id="CP002686">
    <property type="protein sequence ID" value="AEE78798.1"/>
    <property type="molecule type" value="Genomic_DNA"/>
</dbReference>
<dbReference type="PIR" id="T45780">
    <property type="entry name" value="T45780"/>
</dbReference>
<dbReference type="RefSeq" id="NP_190717.1">
    <molecule id="Q9SD00-1"/>
    <property type="nucleotide sequence ID" value="NM_115008.1"/>
</dbReference>
<dbReference type="STRING" id="3702.Q9SD00"/>
<dbReference type="PaxDb" id="3702-AT3G51490.2"/>
<dbReference type="EnsemblPlants" id="AT3G51490.1">
    <molecule id="Q9SD00-1"/>
    <property type="protein sequence ID" value="AT3G51490.1"/>
    <property type="gene ID" value="AT3G51490"/>
</dbReference>
<dbReference type="GeneID" id="824312"/>
<dbReference type="Gramene" id="AT3G51490.1">
    <molecule id="Q9SD00-1"/>
    <property type="protein sequence ID" value="AT3G51490.1"/>
    <property type="gene ID" value="AT3G51490"/>
</dbReference>
<dbReference type="KEGG" id="ath:AT3G51490"/>
<dbReference type="Araport" id="AT3G51490"/>
<dbReference type="TAIR" id="AT3G51490">
    <property type="gene designation" value="TMT3"/>
</dbReference>
<dbReference type="eggNOG" id="KOG0254">
    <property type="taxonomic scope" value="Eukaryota"/>
</dbReference>
<dbReference type="InParanoid" id="Q9SD00"/>
<dbReference type="PhylomeDB" id="Q9SD00"/>
<dbReference type="PRO" id="PR:Q9SD00"/>
<dbReference type="Proteomes" id="UP000006548">
    <property type="component" value="Chromosome 3"/>
</dbReference>
<dbReference type="ExpressionAtlas" id="Q9SD00">
    <property type="expression patterns" value="baseline and differential"/>
</dbReference>
<dbReference type="GO" id="GO:0009705">
    <property type="term" value="C:plant-type vacuole membrane"/>
    <property type="evidence" value="ECO:0000314"/>
    <property type="project" value="UniProtKB"/>
</dbReference>
<dbReference type="GO" id="GO:0022857">
    <property type="term" value="F:transmembrane transporter activity"/>
    <property type="evidence" value="ECO:0007669"/>
    <property type="project" value="InterPro"/>
</dbReference>
<dbReference type="FunFam" id="1.20.1250.20:FF:000108">
    <property type="entry name" value="Monosaccharide-sensing protein 2"/>
    <property type="match status" value="1"/>
</dbReference>
<dbReference type="FunFam" id="1.20.1250.20:FF:000103">
    <property type="entry name" value="monosaccharide-sensing protein 2"/>
    <property type="match status" value="1"/>
</dbReference>
<dbReference type="Gene3D" id="1.20.1250.20">
    <property type="entry name" value="MFS general substrate transporter like domains"/>
    <property type="match status" value="2"/>
</dbReference>
<dbReference type="InterPro" id="IPR020846">
    <property type="entry name" value="MFS_dom"/>
</dbReference>
<dbReference type="InterPro" id="IPR005828">
    <property type="entry name" value="MFS_sugar_transport-like"/>
</dbReference>
<dbReference type="InterPro" id="IPR036259">
    <property type="entry name" value="MFS_trans_sf"/>
</dbReference>
<dbReference type="InterPro" id="IPR050814">
    <property type="entry name" value="Myo-inositol_Transporter"/>
</dbReference>
<dbReference type="InterPro" id="IPR003663">
    <property type="entry name" value="Sugar/inositol_transpt"/>
</dbReference>
<dbReference type="InterPro" id="IPR005829">
    <property type="entry name" value="Sugar_transporter_CS"/>
</dbReference>
<dbReference type="PANTHER" id="PTHR48020">
    <property type="entry name" value="PROTON MYO-INOSITOL COTRANSPORTER"/>
    <property type="match status" value="1"/>
</dbReference>
<dbReference type="PANTHER" id="PTHR48020:SF35">
    <property type="entry name" value="SUGAR TRANSPORTER"/>
    <property type="match status" value="1"/>
</dbReference>
<dbReference type="Pfam" id="PF00083">
    <property type="entry name" value="Sugar_tr"/>
    <property type="match status" value="2"/>
</dbReference>
<dbReference type="PRINTS" id="PR00171">
    <property type="entry name" value="SUGRTRNSPORT"/>
</dbReference>
<dbReference type="SUPFAM" id="SSF103473">
    <property type="entry name" value="MFS general substrate transporter"/>
    <property type="match status" value="1"/>
</dbReference>
<dbReference type="PROSITE" id="PS50850">
    <property type="entry name" value="MFS"/>
    <property type="match status" value="1"/>
</dbReference>
<dbReference type="PROSITE" id="PS00216">
    <property type="entry name" value="SUGAR_TRANSPORT_1"/>
    <property type="match status" value="1"/>
</dbReference>
<dbReference type="PROSITE" id="PS00217">
    <property type="entry name" value="SUGAR_TRANSPORT_2"/>
    <property type="match status" value="1"/>
</dbReference>
<accession>Q9SD00</accession>
<sequence length="729" mass="78828">MRSVVLVALAAAIGNMLQGWDNATIAGAVIYIKKEFHLEKEPKIEGLIVAMSLIGATLITTFSGPVSDKVGRRSMLILSSVLYFLSSIVMFWSPNVYVLLFARLLDGFGIGLAVTLVPIYISETAPSEIRGLLNTFPQFCGSGGMFLSYCLVFGMSLQESPSWRLMLGVLSIPSIAYFVLAAFFLPESPRWLVSKGRMDEARQVLQRLRGREDVSGELALLVEGLGVGKDTSIEEYVIGPDNEENEGGNELPRKDQIKLYGPEDGQSWMAKPVKGQSSLALASRQGSMLPRGGSLMDPLVTLFGSIHENLPSENMNASSRSMLFPNMGSILGMMGRQESQWDPERNNEDSSDQDENLNSPLLSPQTTEPDDYHQRTVGTMHRRQSSLFMANVGETATATSIGGGWQLAWKYNDKVGADGKRVNGGLQRMYIHEETANNNTNNIPFSRRGSLLSFHPEGDGHDQVNGYVQAAALVSQASMMPGGKGETAMLPKEVKDGPGWRELKEPGVKRALMVGVGLQILQQFAGINGVMYYTPQILEETGVSSLLTNLGISAESASLLISALTTLLMLPCILVSMRSLMLSTIPILILSLVTLVIGSLVNLGGSINALISTASVTVYLSCFVMGFGAIPNILCSEIFPTSVRGLCITICALTFWICDIIVTYTLPVMLKSIGIAGVFGIYAIVCAVAWVFVYLKVPETKGMPLEVISEFFSVGAKQQDAAASFLSDG</sequence>
<reference key="1">
    <citation type="submission" date="2002-12" db="EMBL/GenBank/DDBJ databases">
        <title>A novel family of plant monosaccharide transporters is involved in a new type of eukaryotic sugar sensing.</title>
        <authorList>
            <person name="Stamme C."/>
            <person name="Tjaden J."/>
            <person name="Trentmann O."/>
            <person name="Emmerlich V."/>
            <person name="Neuhaus E."/>
        </authorList>
    </citation>
    <scope>NUCLEOTIDE SEQUENCE [MRNA]</scope>
</reference>
<reference key="2">
    <citation type="journal article" date="2000" name="Nature">
        <title>Sequence and analysis of chromosome 3 of the plant Arabidopsis thaliana.</title>
        <authorList>
            <person name="Salanoubat M."/>
            <person name="Lemcke K."/>
            <person name="Rieger M."/>
            <person name="Ansorge W."/>
            <person name="Unseld M."/>
            <person name="Fartmann B."/>
            <person name="Valle G."/>
            <person name="Bloecker H."/>
            <person name="Perez-Alonso M."/>
            <person name="Obermaier B."/>
            <person name="Delseny M."/>
            <person name="Boutry M."/>
            <person name="Grivell L.A."/>
            <person name="Mache R."/>
            <person name="Puigdomenech P."/>
            <person name="De Simone V."/>
            <person name="Choisne N."/>
            <person name="Artiguenave F."/>
            <person name="Robert C."/>
            <person name="Brottier P."/>
            <person name="Wincker P."/>
            <person name="Cattolico L."/>
            <person name="Weissenbach J."/>
            <person name="Saurin W."/>
            <person name="Quetier F."/>
            <person name="Schaefer M."/>
            <person name="Mueller-Auer S."/>
            <person name="Gabel C."/>
            <person name="Fuchs M."/>
            <person name="Benes V."/>
            <person name="Wurmbach E."/>
            <person name="Drzonek H."/>
            <person name="Erfle H."/>
            <person name="Jordan N."/>
            <person name="Bangert S."/>
            <person name="Wiedelmann R."/>
            <person name="Kranz H."/>
            <person name="Voss H."/>
            <person name="Holland R."/>
            <person name="Brandt P."/>
            <person name="Nyakatura G."/>
            <person name="Vezzi A."/>
            <person name="D'Angelo M."/>
            <person name="Pallavicini A."/>
            <person name="Toppo S."/>
            <person name="Simionati B."/>
            <person name="Conrad A."/>
            <person name="Hornischer K."/>
            <person name="Kauer G."/>
            <person name="Loehnert T.-H."/>
            <person name="Nordsiek G."/>
            <person name="Reichelt J."/>
            <person name="Scharfe M."/>
            <person name="Schoen O."/>
            <person name="Bargues M."/>
            <person name="Terol J."/>
            <person name="Climent J."/>
            <person name="Navarro P."/>
            <person name="Collado C."/>
            <person name="Perez-Perez A."/>
            <person name="Ottenwaelder B."/>
            <person name="Duchemin D."/>
            <person name="Cooke R."/>
            <person name="Laudie M."/>
            <person name="Berger-Llauro C."/>
            <person name="Purnelle B."/>
            <person name="Masuy D."/>
            <person name="de Haan M."/>
            <person name="Maarse A.C."/>
            <person name="Alcaraz J.-P."/>
            <person name="Cottet A."/>
            <person name="Casacuberta E."/>
            <person name="Monfort A."/>
            <person name="Argiriou A."/>
            <person name="Flores M."/>
            <person name="Liguori R."/>
            <person name="Vitale D."/>
            <person name="Mannhaupt G."/>
            <person name="Haase D."/>
            <person name="Schoof H."/>
            <person name="Rudd S."/>
            <person name="Zaccaria P."/>
            <person name="Mewes H.-W."/>
            <person name="Mayer K.F.X."/>
            <person name="Kaul S."/>
            <person name="Town C.D."/>
            <person name="Koo H.L."/>
            <person name="Tallon L.J."/>
            <person name="Jenkins J."/>
            <person name="Rooney T."/>
            <person name="Rizzo M."/>
            <person name="Walts A."/>
            <person name="Utterback T."/>
            <person name="Fujii C.Y."/>
            <person name="Shea T.P."/>
            <person name="Creasy T.H."/>
            <person name="Haas B."/>
            <person name="Maiti R."/>
            <person name="Wu D."/>
            <person name="Peterson J."/>
            <person name="Van Aken S."/>
            <person name="Pai G."/>
            <person name="Militscher J."/>
            <person name="Sellers P."/>
            <person name="Gill J.E."/>
            <person name="Feldblyum T.V."/>
            <person name="Preuss D."/>
            <person name="Lin X."/>
            <person name="Nierman W.C."/>
            <person name="Salzberg S.L."/>
            <person name="White O."/>
            <person name="Venter J.C."/>
            <person name="Fraser C.M."/>
            <person name="Kaneko T."/>
            <person name="Nakamura Y."/>
            <person name="Sato S."/>
            <person name="Kato T."/>
            <person name="Asamizu E."/>
            <person name="Sasamoto S."/>
            <person name="Kimura T."/>
            <person name="Idesawa K."/>
            <person name="Kawashima K."/>
            <person name="Kishida Y."/>
            <person name="Kiyokawa C."/>
            <person name="Kohara M."/>
            <person name="Matsumoto M."/>
            <person name="Matsuno A."/>
            <person name="Muraki A."/>
            <person name="Nakayama S."/>
            <person name="Nakazaki N."/>
            <person name="Shinpo S."/>
            <person name="Takeuchi C."/>
            <person name="Wada T."/>
            <person name="Watanabe A."/>
            <person name="Yamada M."/>
            <person name="Yasuda M."/>
            <person name="Tabata S."/>
        </authorList>
    </citation>
    <scope>NUCLEOTIDE SEQUENCE [LARGE SCALE GENOMIC DNA]</scope>
    <source>
        <strain>cv. Columbia</strain>
    </source>
</reference>
<reference key="3">
    <citation type="journal article" date="2017" name="Plant J.">
        <title>Araport11: a complete reannotation of the Arabidopsis thaliana reference genome.</title>
        <authorList>
            <person name="Cheng C.Y."/>
            <person name="Krishnakumar V."/>
            <person name="Chan A.P."/>
            <person name="Thibaud-Nissen F."/>
            <person name="Schobel S."/>
            <person name="Town C.D."/>
        </authorList>
    </citation>
    <scope>GENOME REANNOTATION</scope>
    <source>
        <strain>cv. Columbia</strain>
    </source>
</reference>
<reference key="4">
    <citation type="journal article" date="2006" name="BMC Evol. Biol.">
        <title>The monosaccharide transporter gene family in land plants is ancient and shows differential subfamily expression and expansion across lineages.</title>
        <authorList>
            <person name="Johnson D.A."/>
            <person name="Hill J.P."/>
            <person name="Thomas M.A."/>
        </authorList>
    </citation>
    <scope>GENE FAMILY</scope>
</reference>
<reference key="5">
    <citation type="journal article" date="2006" name="Plant Cell">
        <title>Molecular identification and physiological characterization of a novel monosaccharide transporter from Arabidopsis involved in vacuolar sugar transport.</title>
        <authorList>
            <person name="Wormit A."/>
            <person name="Trentmann O."/>
            <person name="Feifer I."/>
            <person name="Lohr C."/>
            <person name="Tjaden J."/>
            <person name="Meyer S."/>
            <person name="Schmidt U."/>
            <person name="Martinoia E."/>
            <person name="Neuhaus H.E."/>
        </authorList>
    </citation>
    <scope>FUNCTION</scope>
    <scope>DISRUPTION PHENOTYPE</scope>
    <scope>SUBCELLULAR LOCATION</scope>
    <scope>TISSUE SPECIFICITY</scope>
    <scope>DEVELOPMENTAL STAGE</scope>
</reference>
<reference key="6">
    <citation type="journal article" date="2007" name="FEBS Lett.">
        <title>Transport of primary metabolites across the plant vacuolar membrane.</title>
        <authorList>
            <person name="Neuhaus H.E."/>
        </authorList>
    </citation>
    <scope>REVIEW ON VACUOLAR TRANSPORTERS</scope>
</reference>
<feature type="chain" id="PRO_0000259884" description="Monosaccharide-sensing protein 3">
    <location>
        <begin position="1"/>
        <end position="729"/>
    </location>
</feature>
<feature type="transmembrane region" description="Helical; Name=1" evidence="2">
    <location>
        <begin position="5"/>
        <end position="25"/>
    </location>
</feature>
<feature type="transmembrane region" description="Helical; Name=2" evidence="2">
    <location>
        <begin position="46"/>
        <end position="66"/>
    </location>
</feature>
<feature type="transmembrane region" description="Helical; Name=3" evidence="2">
    <location>
        <begin position="81"/>
        <end position="101"/>
    </location>
</feature>
<feature type="transmembrane region" description="Helical; Name=4" evidence="2">
    <location>
        <begin position="104"/>
        <end position="124"/>
    </location>
</feature>
<feature type="transmembrane region" description="Helical; Name=5" evidence="2">
    <location>
        <begin position="135"/>
        <end position="155"/>
    </location>
</feature>
<feature type="transmembrane region" description="Helical; Name=6" evidence="2">
    <location>
        <begin position="165"/>
        <end position="185"/>
    </location>
</feature>
<feature type="transmembrane region" description="Helical; Name=7" evidence="2">
    <location>
        <begin position="511"/>
        <end position="531"/>
    </location>
</feature>
<feature type="transmembrane region" description="Helical; Name=8" evidence="2">
    <location>
        <begin position="557"/>
        <end position="577"/>
    </location>
</feature>
<feature type="transmembrane region" description="Helical; Name=9" evidence="2">
    <location>
        <begin position="581"/>
        <end position="601"/>
    </location>
</feature>
<feature type="transmembrane region" description="Helical; Name=10" evidence="2">
    <location>
        <begin position="610"/>
        <end position="630"/>
    </location>
</feature>
<feature type="transmembrane region" description="Helical; Name=11" evidence="2">
    <location>
        <begin position="650"/>
        <end position="670"/>
    </location>
</feature>
<feature type="transmembrane region" description="Helical; Name=12" evidence="2">
    <location>
        <begin position="673"/>
        <end position="693"/>
    </location>
</feature>
<feature type="region of interest" description="Disordered" evidence="3">
    <location>
        <begin position="337"/>
        <end position="372"/>
    </location>
</feature>
<feature type="compositionally biased region" description="Polar residues" evidence="3">
    <location>
        <begin position="356"/>
        <end position="367"/>
    </location>
</feature>
<feature type="modified residue" description="Phosphoserine" evidence="1">
    <location>
        <position position="446"/>
    </location>
</feature>
<name>MSSP3_ARATH</name>
<protein>
    <recommendedName>
        <fullName evidence="6">Monosaccharide-sensing protein 3</fullName>
    </recommendedName>
    <alternativeName>
        <fullName evidence="6">Sugar transporter MSSP3</fullName>
    </alternativeName>
    <alternativeName>
        <fullName evidence="5">Tonoplast monosaccharide transporter 3</fullName>
        <shortName evidence="5">AtTMT3</shortName>
    </alternativeName>
</protein>
<gene>
    <name evidence="6" type="primary">MSSP3</name>
    <name evidence="5" type="synonym">TMT3</name>
    <name evidence="7" type="ordered locus">At3g51490</name>
    <name evidence="8" type="ORF">F26O13.130</name>
</gene>
<evidence type="ECO:0000250" key="1">
    <source>
        <dbReference type="UniProtKB" id="Q96290"/>
    </source>
</evidence>
<evidence type="ECO:0000255" key="2"/>
<evidence type="ECO:0000256" key="3">
    <source>
        <dbReference type="SAM" id="MobiDB-lite"/>
    </source>
</evidence>
<evidence type="ECO:0000269" key="4">
    <source>
    </source>
</evidence>
<evidence type="ECO:0000303" key="5">
    <source>
    </source>
</evidence>
<evidence type="ECO:0000305" key="6"/>
<evidence type="ECO:0000312" key="7">
    <source>
        <dbReference type="Araport" id="AT3G51490"/>
    </source>
</evidence>
<evidence type="ECO:0000312" key="8">
    <source>
        <dbReference type="EMBL" id="CAB63013.1"/>
    </source>
</evidence>
<proteinExistence type="evidence at transcript level"/>
<organism>
    <name type="scientific">Arabidopsis thaliana</name>
    <name type="common">Mouse-ear cress</name>
    <dbReference type="NCBI Taxonomy" id="3702"/>
    <lineage>
        <taxon>Eukaryota</taxon>
        <taxon>Viridiplantae</taxon>
        <taxon>Streptophyta</taxon>
        <taxon>Embryophyta</taxon>
        <taxon>Tracheophyta</taxon>
        <taxon>Spermatophyta</taxon>
        <taxon>Magnoliopsida</taxon>
        <taxon>eudicotyledons</taxon>
        <taxon>Gunneridae</taxon>
        <taxon>Pentapetalae</taxon>
        <taxon>rosids</taxon>
        <taxon>malvids</taxon>
        <taxon>Brassicales</taxon>
        <taxon>Brassicaceae</taxon>
        <taxon>Camelineae</taxon>
        <taxon>Arabidopsis</taxon>
    </lineage>
</organism>
<keyword id="KW-0025">Alternative splicing</keyword>
<keyword id="KW-0472">Membrane</keyword>
<keyword id="KW-0597">Phosphoprotein</keyword>
<keyword id="KW-1185">Reference proteome</keyword>
<keyword id="KW-0762">Sugar transport</keyword>
<keyword id="KW-0812">Transmembrane</keyword>
<keyword id="KW-1133">Transmembrane helix</keyword>
<keyword id="KW-0813">Transport</keyword>
<keyword id="KW-0926">Vacuole</keyword>
<comment type="function">
    <text evidence="4">Sugar proton-coupled antiporter which contributes to vacuolar sugar import (e.g. monosaccharides including glucose,sucrose and fructose), particularly during stress responses (e.g. in response to cold).</text>
</comment>
<comment type="catalytic activity">
    <reaction evidence="1">
        <text>D-glucose(out) + H(+)(in) = D-glucose(in) + H(+)(out)</text>
        <dbReference type="Rhea" id="RHEA:73203"/>
        <dbReference type="ChEBI" id="CHEBI:4167"/>
        <dbReference type="ChEBI" id="CHEBI:15378"/>
    </reaction>
    <physiologicalReaction direction="left-to-right" evidence="1">
        <dbReference type="Rhea" id="RHEA:73204"/>
    </physiologicalReaction>
</comment>
<comment type="catalytic activity">
    <reaction evidence="1">
        <text>sucrose(out) + H(+)(in) = sucrose(in) + H(+)(out)</text>
        <dbReference type="Rhea" id="RHEA:73211"/>
        <dbReference type="ChEBI" id="CHEBI:15378"/>
        <dbReference type="ChEBI" id="CHEBI:17992"/>
    </reaction>
    <physiologicalReaction direction="left-to-right" evidence="1">
        <dbReference type="Rhea" id="RHEA:73212"/>
    </physiologicalReaction>
</comment>
<comment type="subcellular location">
    <subcellularLocation>
        <location evidence="4">Vacuole membrane</location>
        <topology evidence="2">Multi-pass membrane protein</topology>
    </subcellularLocation>
</comment>
<comment type="alternative products">
    <event type="alternative splicing"/>
    <isoform>
        <id>Q9SD00-1</id>
        <name>1</name>
        <sequence type="displayed"/>
    </isoform>
    <text>A number of isoforms are produced. According to EST sequences.</text>
</comment>
<comment type="tissue specificity">
    <text evidence="4">Weakly expressed.</text>
</comment>
<comment type="developmental stage">
    <text evidence="4">Observed at low levels in stamen filaments and at the very edges of mature leaves.</text>
</comment>
<comment type="disruption phenotype">
    <text evidence="4">In triple knockout plants missing MSSP1, MSSP2 and MSSP3, reduced accumulation of glucose and fructose during cold adaptation.</text>
</comment>
<comment type="similarity">
    <text evidence="6">Belongs to the major facilitator superfamily. Sugar transporter (TC 2.A.1.1) family.</text>
</comment>